<protein>
    <recommendedName>
        <fullName evidence="1">Bifunctional protein FolD</fullName>
    </recommendedName>
    <domain>
        <recommendedName>
            <fullName evidence="1">Methylenetetrahydrofolate dehydrogenase</fullName>
            <ecNumber evidence="1">1.5.1.5</ecNumber>
        </recommendedName>
    </domain>
    <domain>
        <recommendedName>
            <fullName evidence="1">Methenyltetrahydrofolate cyclohydrolase</fullName>
            <ecNumber evidence="1">3.5.4.9</ecNumber>
        </recommendedName>
    </domain>
</protein>
<evidence type="ECO:0000255" key="1">
    <source>
        <dbReference type="HAMAP-Rule" id="MF_01576"/>
    </source>
</evidence>
<gene>
    <name evidence="1" type="primary">folD</name>
</gene>
<name>FOLD_STRTR</name>
<comment type="function">
    <text evidence="1">Catalyzes the oxidation of 5,10-methylenetetrahydrofolate to 5,10-methenyltetrahydrofolate and then the hydrolysis of 5,10-methenyltetrahydrofolate to 10-formyltetrahydrofolate.</text>
</comment>
<comment type="catalytic activity">
    <reaction evidence="1">
        <text>(6R)-5,10-methylene-5,6,7,8-tetrahydrofolate + NADP(+) = (6R)-5,10-methenyltetrahydrofolate + NADPH</text>
        <dbReference type="Rhea" id="RHEA:22812"/>
        <dbReference type="ChEBI" id="CHEBI:15636"/>
        <dbReference type="ChEBI" id="CHEBI:57455"/>
        <dbReference type="ChEBI" id="CHEBI:57783"/>
        <dbReference type="ChEBI" id="CHEBI:58349"/>
        <dbReference type="EC" id="1.5.1.5"/>
    </reaction>
</comment>
<comment type="catalytic activity">
    <reaction evidence="1">
        <text>(6R)-5,10-methenyltetrahydrofolate + H2O = (6R)-10-formyltetrahydrofolate + H(+)</text>
        <dbReference type="Rhea" id="RHEA:23700"/>
        <dbReference type="ChEBI" id="CHEBI:15377"/>
        <dbReference type="ChEBI" id="CHEBI:15378"/>
        <dbReference type="ChEBI" id="CHEBI:57455"/>
        <dbReference type="ChEBI" id="CHEBI:195366"/>
        <dbReference type="EC" id="3.5.4.9"/>
    </reaction>
</comment>
<comment type="pathway">
    <text evidence="1">One-carbon metabolism; tetrahydrofolate interconversion.</text>
</comment>
<comment type="subunit">
    <text evidence="1">Homodimer.</text>
</comment>
<comment type="similarity">
    <text evidence="1">Belongs to the tetrahydrofolate dehydrogenase/cyclohydrolase family.</text>
</comment>
<reference key="1">
    <citation type="journal article" date="1996" name="Mol. Microbiol.">
        <title>Disruption of the gene encoding penicillin-binding protein 2b (pbp2b) causes altered cell morphology and cease in exopolysaccharide production in Streptococcus thermophilus Sfi6.</title>
        <authorList>
            <person name="Stingele F."/>
            <person name="Mollet B."/>
        </authorList>
    </citation>
    <scope>NUCLEOTIDE SEQUENCE [GENOMIC DNA]</scope>
    <source>
        <strain>Sfi6</strain>
    </source>
</reference>
<dbReference type="EC" id="1.5.1.5" evidence="1"/>
<dbReference type="EC" id="3.5.4.9" evidence="1"/>
<dbReference type="EMBL" id="U58210">
    <property type="protein sequence ID" value="AAC44612.1"/>
    <property type="molecule type" value="Genomic_DNA"/>
</dbReference>
<dbReference type="RefSeq" id="WP_041826990.1">
    <property type="nucleotide sequence ID" value="NZ_RIIZ01000009.1"/>
</dbReference>
<dbReference type="SMR" id="P96050"/>
<dbReference type="KEGG" id="sths:AVT04_01855"/>
<dbReference type="eggNOG" id="COG0190">
    <property type="taxonomic scope" value="Bacteria"/>
</dbReference>
<dbReference type="UniPathway" id="UPA00193"/>
<dbReference type="GO" id="GO:0005829">
    <property type="term" value="C:cytosol"/>
    <property type="evidence" value="ECO:0007669"/>
    <property type="project" value="TreeGrafter"/>
</dbReference>
<dbReference type="GO" id="GO:0004477">
    <property type="term" value="F:methenyltetrahydrofolate cyclohydrolase activity"/>
    <property type="evidence" value="ECO:0007669"/>
    <property type="project" value="UniProtKB-UniRule"/>
</dbReference>
<dbReference type="GO" id="GO:0004488">
    <property type="term" value="F:methylenetetrahydrofolate dehydrogenase (NADP+) activity"/>
    <property type="evidence" value="ECO:0007669"/>
    <property type="project" value="UniProtKB-UniRule"/>
</dbReference>
<dbReference type="GO" id="GO:0000105">
    <property type="term" value="P:L-histidine biosynthetic process"/>
    <property type="evidence" value="ECO:0007669"/>
    <property type="project" value="UniProtKB-KW"/>
</dbReference>
<dbReference type="GO" id="GO:0009086">
    <property type="term" value="P:methionine biosynthetic process"/>
    <property type="evidence" value="ECO:0007669"/>
    <property type="project" value="UniProtKB-KW"/>
</dbReference>
<dbReference type="GO" id="GO:0006164">
    <property type="term" value="P:purine nucleotide biosynthetic process"/>
    <property type="evidence" value="ECO:0007669"/>
    <property type="project" value="UniProtKB-KW"/>
</dbReference>
<dbReference type="GO" id="GO:0035999">
    <property type="term" value="P:tetrahydrofolate interconversion"/>
    <property type="evidence" value="ECO:0007669"/>
    <property type="project" value="UniProtKB-UniRule"/>
</dbReference>
<dbReference type="CDD" id="cd01080">
    <property type="entry name" value="NAD_bind_m-THF_DH_Cyclohyd"/>
    <property type="match status" value="1"/>
</dbReference>
<dbReference type="FunFam" id="3.40.50.720:FF:000094">
    <property type="entry name" value="Bifunctional protein FolD"/>
    <property type="match status" value="1"/>
</dbReference>
<dbReference type="FunFam" id="3.40.50.10860:FF:000005">
    <property type="entry name" value="C-1-tetrahydrofolate synthase, cytoplasmic, putative"/>
    <property type="match status" value="1"/>
</dbReference>
<dbReference type="Gene3D" id="3.40.50.10860">
    <property type="entry name" value="Leucine Dehydrogenase, chain A, domain 1"/>
    <property type="match status" value="1"/>
</dbReference>
<dbReference type="Gene3D" id="3.40.50.720">
    <property type="entry name" value="NAD(P)-binding Rossmann-like Domain"/>
    <property type="match status" value="1"/>
</dbReference>
<dbReference type="HAMAP" id="MF_01576">
    <property type="entry name" value="THF_DHG_CYH"/>
    <property type="match status" value="1"/>
</dbReference>
<dbReference type="InterPro" id="IPR046346">
    <property type="entry name" value="Aminoacid_DH-like_N_sf"/>
</dbReference>
<dbReference type="InterPro" id="IPR036291">
    <property type="entry name" value="NAD(P)-bd_dom_sf"/>
</dbReference>
<dbReference type="InterPro" id="IPR000672">
    <property type="entry name" value="THF_DH/CycHdrlase"/>
</dbReference>
<dbReference type="InterPro" id="IPR020630">
    <property type="entry name" value="THF_DH/CycHdrlase_cat_dom"/>
</dbReference>
<dbReference type="InterPro" id="IPR020867">
    <property type="entry name" value="THF_DH/CycHdrlase_CS"/>
</dbReference>
<dbReference type="InterPro" id="IPR020631">
    <property type="entry name" value="THF_DH/CycHdrlase_NAD-bd_dom"/>
</dbReference>
<dbReference type="NCBIfam" id="NF008058">
    <property type="entry name" value="PRK10792.1"/>
    <property type="match status" value="1"/>
</dbReference>
<dbReference type="NCBIfam" id="NF010776">
    <property type="entry name" value="PRK14179.1"/>
    <property type="match status" value="1"/>
</dbReference>
<dbReference type="NCBIfam" id="NF010783">
    <property type="entry name" value="PRK14186.1"/>
    <property type="match status" value="1"/>
</dbReference>
<dbReference type="PANTHER" id="PTHR48099:SF5">
    <property type="entry name" value="C-1-TETRAHYDROFOLATE SYNTHASE, CYTOPLASMIC"/>
    <property type="match status" value="1"/>
</dbReference>
<dbReference type="PANTHER" id="PTHR48099">
    <property type="entry name" value="C-1-TETRAHYDROFOLATE SYNTHASE, CYTOPLASMIC-RELATED"/>
    <property type="match status" value="1"/>
</dbReference>
<dbReference type="Pfam" id="PF00763">
    <property type="entry name" value="THF_DHG_CYH"/>
    <property type="match status" value="1"/>
</dbReference>
<dbReference type="Pfam" id="PF02882">
    <property type="entry name" value="THF_DHG_CYH_C"/>
    <property type="match status" value="1"/>
</dbReference>
<dbReference type="PRINTS" id="PR00085">
    <property type="entry name" value="THFDHDRGNASE"/>
</dbReference>
<dbReference type="SUPFAM" id="SSF53223">
    <property type="entry name" value="Aminoacid dehydrogenase-like, N-terminal domain"/>
    <property type="match status" value="1"/>
</dbReference>
<dbReference type="SUPFAM" id="SSF51735">
    <property type="entry name" value="NAD(P)-binding Rossmann-fold domains"/>
    <property type="match status" value="1"/>
</dbReference>
<dbReference type="PROSITE" id="PS00766">
    <property type="entry name" value="THF_DHG_CYH_1"/>
    <property type="match status" value="1"/>
</dbReference>
<dbReference type="PROSITE" id="PS00767">
    <property type="entry name" value="THF_DHG_CYH_2"/>
    <property type="match status" value="1"/>
</dbReference>
<proteinExistence type="inferred from homology"/>
<accession>P96050</accession>
<feature type="chain" id="PRO_0000199317" description="Bifunctional protein FolD">
    <location>
        <begin position="1"/>
        <end position="284"/>
    </location>
</feature>
<feature type="binding site" evidence="1">
    <location>
        <begin position="165"/>
        <end position="167"/>
    </location>
    <ligand>
        <name>NADP(+)</name>
        <dbReference type="ChEBI" id="CHEBI:58349"/>
    </ligand>
</feature>
<feature type="binding site" evidence="1">
    <location>
        <position position="190"/>
    </location>
    <ligand>
        <name>NADP(+)</name>
        <dbReference type="ChEBI" id="CHEBI:58349"/>
    </ligand>
</feature>
<feature type="binding site" evidence="1">
    <location>
        <position position="231"/>
    </location>
    <ligand>
        <name>NADP(+)</name>
        <dbReference type="ChEBI" id="CHEBI:58349"/>
    </ligand>
</feature>
<keyword id="KW-0028">Amino-acid biosynthesis</keyword>
<keyword id="KW-0368">Histidine biosynthesis</keyword>
<keyword id="KW-0378">Hydrolase</keyword>
<keyword id="KW-0486">Methionine biosynthesis</keyword>
<keyword id="KW-0511">Multifunctional enzyme</keyword>
<keyword id="KW-0521">NADP</keyword>
<keyword id="KW-0554">One-carbon metabolism</keyword>
<keyword id="KW-0560">Oxidoreductase</keyword>
<keyword id="KW-0658">Purine biosynthesis</keyword>
<organism>
    <name type="scientific">Streptococcus thermophilus</name>
    <dbReference type="NCBI Taxonomy" id="1308"/>
    <lineage>
        <taxon>Bacteria</taxon>
        <taxon>Bacillati</taxon>
        <taxon>Bacillota</taxon>
        <taxon>Bacilli</taxon>
        <taxon>Lactobacillales</taxon>
        <taxon>Streptococcaceae</taxon>
        <taxon>Streptococcus</taxon>
    </lineage>
</organism>
<sequence length="284" mass="31383">MAIIMDGKALAVNMQEQLQEKVARLKEKEWIVPGLVVIMVGENPASQVYVRNKERAAKKAGFHSKTVNLSESISEEELIEVIEKYNQNPLFHGILVQLPLPNHINEMRILLAIDPKKDVDGFHPMNTGNLWNGRPQMVPCTPAGIMEILREYNVELEGKTAVIIGRSNIVGKPMAQLLLEKNATVTLTHSRTPHLAKVCNKADVLIVAIGRAKFVTEEFVKEGAVVIDVGINRDEEGKLCGDVDFDQVKEKVSMITPVPGGVGPMTITMLMEQTYQAALRSLKG</sequence>